<reference key="1">
    <citation type="submission" date="2009-07" db="EMBL/GenBank/DDBJ databases">
        <title>Complete sequence of Pectobacterium carotovorum subsp. carotovorum PC1.</title>
        <authorList>
            <consortium name="US DOE Joint Genome Institute"/>
            <person name="Lucas S."/>
            <person name="Copeland A."/>
            <person name="Lapidus A."/>
            <person name="Glavina del Rio T."/>
            <person name="Tice H."/>
            <person name="Bruce D."/>
            <person name="Goodwin L."/>
            <person name="Pitluck S."/>
            <person name="Munk A.C."/>
            <person name="Brettin T."/>
            <person name="Detter J.C."/>
            <person name="Han C."/>
            <person name="Tapia R."/>
            <person name="Larimer F."/>
            <person name="Land M."/>
            <person name="Hauser L."/>
            <person name="Kyrpides N."/>
            <person name="Mikhailova N."/>
            <person name="Balakrishnan V."/>
            <person name="Glasner J."/>
            <person name="Perna N.T."/>
        </authorList>
    </citation>
    <scope>NUCLEOTIDE SEQUENCE [LARGE SCALE GENOMIC DNA]</scope>
    <source>
        <strain>PC1</strain>
    </source>
</reference>
<keyword id="KW-0687">Ribonucleoprotein</keyword>
<keyword id="KW-0689">Ribosomal protein</keyword>
<dbReference type="EMBL" id="CP001657">
    <property type="protein sequence ID" value="ACT15114.1"/>
    <property type="molecule type" value="Genomic_DNA"/>
</dbReference>
<dbReference type="RefSeq" id="WP_005967968.1">
    <property type="nucleotide sequence ID" value="NC_012917.1"/>
</dbReference>
<dbReference type="SMR" id="C6DIC0"/>
<dbReference type="STRING" id="561230.PC1_4099"/>
<dbReference type="GeneID" id="90765394"/>
<dbReference type="KEGG" id="pct:PC1_4099"/>
<dbReference type="eggNOG" id="COG0227">
    <property type="taxonomic scope" value="Bacteria"/>
</dbReference>
<dbReference type="HOGENOM" id="CLU_064548_3_1_6"/>
<dbReference type="OrthoDB" id="9805609at2"/>
<dbReference type="Proteomes" id="UP000002736">
    <property type="component" value="Chromosome"/>
</dbReference>
<dbReference type="GO" id="GO:0022625">
    <property type="term" value="C:cytosolic large ribosomal subunit"/>
    <property type="evidence" value="ECO:0007669"/>
    <property type="project" value="TreeGrafter"/>
</dbReference>
<dbReference type="GO" id="GO:0003735">
    <property type="term" value="F:structural constituent of ribosome"/>
    <property type="evidence" value="ECO:0007669"/>
    <property type="project" value="InterPro"/>
</dbReference>
<dbReference type="GO" id="GO:0006412">
    <property type="term" value="P:translation"/>
    <property type="evidence" value="ECO:0007669"/>
    <property type="project" value="UniProtKB-UniRule"/>
</dbReference>
<dbReference type="FunFam" id="2.30.170.40:FF:000001">
    <property type="entry name" value="50S ribosomal protein L28"/>
    <property type="match status" value="1"/>
</dbReference>
<dbReference type="Gene3D" id="2.30.170.40">
    <property type="entry name" value="Ribosomal protein L28/L24"/>
    <property type="match status" value="1"/>
</dbReference>
<dbReference type="HAMAP" id="MF_00373">
    <property type="entry name" value="Ribosomal_bL28"/>
    <property type="match status" value="1"/>
</dbReference>
<dbReference type="InterPro" id="IPR026569">
    <property type="entry name" value="Ribosomal_bL28"/>
</dbReference>
<dbReference type="InterPro" id="IPR034704">
    <property type="entry name" value="Ribosomal_bL28/bL31-like_sf"/>
</dbReference>
<dbReference type="InterPro" id="IPR001383">
    <property type="entry name" value="Ribosomal_bL28_bact-type"/>
</dbReference>
<dbReference type="InterPro" id="IPR037147">
    <property type="entry name" value="Ribosomal_bL28_sf"/>
</dbReference>
<dbReference type="NCBIfam" id="TIGR00009">
    <property type="entry name" value="L28"/>
    <property type="match status" value="1"/>
</dbReference>
<dbReference type="PANTHER" id="PTHR13528">
    <property type="entry name" value="39S RIBOSOMAL PROTEIN L28, MITOCHONDRIAL"/>
    <property type="match status" value="1"/>
</dbReference>
<dbReference type="PANTHER" id="PTHR13528:SF2">
    <property type="entry name" value="LARGE RIBOSOMAL SUBUNIT PROTEIN BL28M"/>
    <property type="match status" value="1"/>
</dbReference>
<dbReference type="Pfam" id="PF00830">
    <property type="entry name" value="Ribosomal_L28"/>
    <property type="match status" value="1"/>
</dbReference>
<dbReference type="SUPFAM" id="SSF143800">
    <property type="entry name" value="L28p-like"/>
    <property type="match status" value="1"/>
</dbReference>
<gene>
    <name evidence="1" type="primary">rpmB</name>
    <name type="ordered locus">PC1_4099</name>
</gene>
<accession>C6DIC0</accession>
<proteinExistence type="inferred from homology"/>
<name>RL28_PECCP</name>
<comment type="similarity">
    <text evidence="1">Belongs to the bacterial ribosomal protein bL28 family.</text>
</comment>
<protein>
    <recommendedName>
        <fullName evidence="1">Large ribosomal subunit protein bL28</fullName>
    </recommendedName>
    <alternativeName>
        <fullName evidence="2">50S ribosomal protein L28</fullName>
    </alternativeName>
</protein>
<sequence length="78" mass="8946">MSRVCQVTGKRPVAGNNRSHALNATKRRFLPNLHSHRFWVEGEKRFVTLRVSAKGMRVIDKKGIETVLADLRARGEKY</sequence>
<organism>
    <name type="scientific">Pectobacterium carotovorum subsp. carotovorum (strain PC1)</name>
    <dbReference type="NCBI Taxonomy" id="561230"/>
    <lineage>
        <taxon>Bacteria</taxon>
        <taxon>Pseudomonadati</taxon>
        <taxon>Pseudomonadota</taxon>
        <taxon>Gammaproteobacteria</taxon>
        <taxon>Enterobacterales</taxon>
        <taxon>Pectobacteriaceae</taxon>
        <taxon>Pectobacterium</taxon>
    </lineage>
</organism>
<evidence type="ECO:0000255" key="1">
    <source>
        <dbReference type="HAMAP-Rule" id="MF_00373"/>
    </source>
</evidence>
<evidence type="ECO:0000305" key="2"/>
<feature type="chain" id="PRO_1000205607" description="Large ribosomal subunit protein bL28">
    <location>
        <begin position="1"/>
        <end position="78"/>
    </location>
</feature>